<protein>
    <recommendedName>
        <fullName evidence="1">Protein translocase subunit SecA</fullName>
        <ecNumber evidence="1">7.4.2.8</ecNumber>
    </recommendedName>
</protein>
<reference key="1">
    <citation type="journal article" date="2009" name="PLoS Genet.">
        <title>Organised genome dynamics in the Escherichia coli species results in highly diverse adaptive paths.</title>
        <authorList>
            <person name="Touchon M."/>
            <person name="Hoede C."/>
            <person name="Tenaillon O."/>
            <person name="Barbe V."/>
            <person name="Baeriswyl S."/>
            <person name="Bidet P."/>
            <person name="Bingen E."/>
            <person name="Bonacorsi S."/>
            <person name="Bouchier C."/>
            <person name="Bouvet O."/>
            <person name="Calteau A."/>
            <person name="Chiapello H."/>
            <person name="Clermont O."/>
            <person name="Cruveiller S."/>
            <person name="Danchin A."/>
            <person name="Diard M."/>
            <person name="Dossat C."/>
            <person name="Karoui M.E."/>
            <person name="Frapy E."/>
            <person name="Garry L."/>
            <person name="Ghigo J.M."/>
            <person name="Gilles A.M."/>
            <person name="Johnson J."/>
            <person name="Le Bouguenec C."/>
            <person name="Lescat M."/>
            <person name="Mangenot S."/>
            <person name="Martinez-Jehanne V."/>
            <person name="Matic I."/>
            <person name="Nassif X."/>
            <person name="Oztas S."/>
            <person name="Petit M.A."/>
            <person name="Pichon C."/>
            <person name="Rouy Z."/>
            <person name="Ruf C.S."/>
            <person name="Schneider D."/>
            <person name="Tourret J."/>
            <person name="Vacherie B."/>
            <person name="Vallenet D."/>
            <person name="Medigue C."/>
            <person name="Rocha E.P.C."/>
            <person name="Denamur E."/>
        </authorList>
    </citation>
    <scope>NUCLEOTIDE SEQUENCE [LARGE SCALE GENOMIC DNA]</scope>
    <source>
        <strain>IAI39 / ExPEC</strain>
    </source>
</reference>
<name>SECA_ECO7I</name>
<proteinExistence type="inferred from homology"/>
<feature type="chain" id="PRO_1000145007" description="Protein translocase subunit SecA">
    <location>
        <begin position="1"/>
        <end position="901"/>
    </location>
</feature>
<feature type="region of interest" description="Disordered" evidence="2">
    <location>
        <begin position="859"/>
        <end position="901"/>
    </location>
</feature>
<feature type="compositionally biased region" description="Basic residues" evidence="2">
    <location>
        <begin position="891"/>
        <end position="901"/>
    </location>
</feature>
<feature type="binding site" evidence="1">
    <location>
        <position position="87"/>
    </location>
    <ligand>
        <name>ATP</name>
        <dbReference type="ChEBI" id="CHEBI:30616"/>
    </ligand>
</feature>
<feature type="binding site" evidence="1">
    <location>
        <begin position="105"/>
        <end position="109"/>
    </location>
    <ligand>
        <name>ATP</name>
        <dbReference type="ChEBI" id="CHEBI:30616"/>
    </ligand>
</feature>
<feature type="binding site" evidence="1">
    <location>
        <position position="512"/>
    </location>
    <ligand>
        <name>ATP</name>
        <dbReference type="ChEBI" id="CHEBI:30616"/>
    </ligand>
</feature>
<feature type="binding site" evidence="1">
    <location>
        <position position="885"/>
    </location>
    <ligand>
        <name>Zn(2+)</name>
        <dbReference type="ChEBI" id="CHEBI:29105"/>
    </ligand>
</feature>
<feature type="binding site" evidence="1">
    <location>
        <position position="887"/>
    </location>
    <ligand>
        <name>Zn(2+)</name>
        <dbReference type="ChEBI" id="CHEBI:29105"/>
    </ligand>
</feature>
<feature type="binding site" evidence="1">
    <location>
        <position position="896"/>
    </location>
    <ligand>
        <name>Zn(2+)</name>
        <dbReference type="ChEBI" id="CHEBI:29105"/>
    </ligand>
</feature>
<feature type="binding site" evidence="1">
    <location>
        <position position="897"/>
    </location>
    <ligand>
        <name>Zn(2+)</name>
        <dbReference type="ChEBI" id="CHEBI:29105"/>
    </ligand>
</feature>
<comment type="function">
    <text evidence="1">Part of the Sec protein translocase complex. Interacts with the SecYEG preprotein conducting channel. Has a central role in coupling the hydrolysis of ATP to the transfer of proteins into and across the cell membrane, serving both as a receptor for the preprotein-SecB complex and as an ATP-driven molecular motor driving the stepwise translocation of polypeptide chains across the membrane.</text>
</comment>
<comment type="catalytic activity">
    <reaction evidence="1">
        <text>ATP + H2O + cellular proteinSide 1 = ADP + phosphate + cellular proteinSide 2.</text>
        <dbReference type="EC" id="7.4.2.8"/>
    </reaction>
</comment>
<comment type="cofactor">
    <cofactor evidence="1">
        <name>Zn(2+)</name>
        <dbReference type="ChEBI" id="CHEBI:29105"/>
    </cofactor>
    <text evidence="1">May bind 1 zinc ion per subunit.</text>
</comment>
<comment type="subunit">
    <text evidence="1">Monomer and homodimer. Part of the essential Sec protein translocation apparatus which comprises SecA, SecYEG and auxiliary proteins SecDF-YajC and YidC.</text>
</comment>
<comment type="subcellular location">
    <subcellularLocation>
        <location evidence="1">Cell inner membrane</location>
        <topology evidence="1">Peripheral membrane protein</topology>
        <orientation evidence="1">Cytoplasmic side</orientation>
    </subcellularLocation>
    <subcellularLocation>
        <location evidence="1">Cytoplasm</location>
    </subcellularLocation>
    <text evidence="1">Distribution is 50-50.</text>
</comment>
<comment type="induction">
    <text evidence="1">Repressed under conditions of excess protein secretion capacity and derepressed when protein secretion becomes limiting. This is regulated by SecM.</text>
</comment>
<comment type="similarity">
    <text evidence="1">Belongs to the SecA family.</text>
</comment>
<dbReference type="EC" id="7.4.2.8" evidence="1"/>
<dbReference type="EMBL" id="CU928164">
    <property type="protein sequence ID" value="CAR16242.1"/>
    <property type="molecule type" value="Genomic_DNA"/>
</dbReference>
<dbReference type="RefSeq" id="WP_000905780.1">
    <property type="nucleotide sequence ID" value="NC_011750.1"/>
</dbReference>
<dbReference type="RefSeq" id="YP_002406150.1">
    <property type="nucleotide sequence ID" value="NC_011750.1"/>
</dbReference>
<dbReference type="SMR" id="B7NHK4"/>
<dbReference type="STRING" id="585057.ECIAI39_0101"/>
<dbReference type="KEGG" id="ect:ECIAI39_0101"/>
<dbReference type="PATRIC" id="fig|585057.6.peg.110"/>
<dbReference type="HOGENOM" id="CLU_005314_3_0_6"/>
<dbReference type="Proteomes" id="UP000000749">
    <property type="component" value="Chromosome"/>
</dbReference>
<dbReference type="GO" id="GO:0031522">
    <property type="term" value="C:cell envelope Sec protein transport complex"/>
    <property type="evidence" value="ECO:0007669"/>
    <property type="project" value="TreeGrafter"/>
</dbReference>
<dbReference type="GO" id="GO:0005829">
    <property type="term" value="C:cytosol"/>
    <property type="evidence" value="ECO:0007669"/>
    <property type="project" value="TreeGrafter"/>
</dbReference>
<dbReference type="GO" id="GO:0005886">
    <property type="term" value="C:plasma membrane"/>
    <property type="evidence" value="ECO:0007669"/>
    <property type="project" value="UniProtKB-SubCell"/>
</dbReference>
<dbReference type="GO" id="GO:0005524">
    <property type="term" value="F:ATP binding"/>
    <property type="evidence" value="ECO:0007669"/>
    <property type="project" value="UniProtKB-UniRule"/>
</dbReference>
<dbReference type="GO" id="GO:0046872">
    <property type="term" value="F:metal ion binding"/>
    <property type="evidence" value="ECO:0007669"/>
    <property type="project" value="UniProtKB-KW"/>
</dbReference>
<dbReference type="GO" id="GO:0008564">
    <property type="term" value="F:protein-exporting ATPase activity"/>
    <property type="evidence" value="ECO:0007669"/>
    <property type="project" value="UniProtKB-EC"/>
</dbReference>
<dbReference type="GO" id="GO:0065002">
    <property type="term" value="P:intracellular protein transmembrane transport"/>
    <property type="evidence" value="ECO:0007669"/>
    <property type="project" value="UniProtKB-UniRule"/>
</dbReference>
<dbReference type="GO" id="GO:0017038">
    <property type="term" value="P:protein import"/>
    <property type="evidence" value="ECO:0007669"/>
    <property type="project" value="InterPro"/>
</dbReference>
<dbReference type="GO" id="GO:0006605">
    <property type="term" value="P:protein targeting"/>
    <property type="evidence" value="ECO:0007669"/>
    <property type="project" value="UniProtKB-UniRule"/>
</dbReference>
<dbReference type="GO" id="GO:0043952">
    <property type="term" value="P:protein transport by the Sec complex"/>
    <property type="evidence" value="ECO:0007669"/>
    <property type="project" value="TreeGrafter"/>
</dbReference>
<dbReference type="CDD" id="cd17928">
    <property type="entry name" value="DEXDc_SecA"/>
    <property type="match status" value="1"/>
</dbReference>
<dbReference type="CDD" id="cd18803">
    <property type="entry name" value="SF2_C_secA"/>
    <property type="match status" value="1"/>
</dbReference>
<dbReference type="FunFam" id="1.10.3060.10:FF:000001">
    <property type="entry name" value="Preprotein translocase subunit SecA"/>
    <property type="match status" value="1"/>
</dbReference>
<dbReference type="FunFam" id="3.40.50.300:FF:000081">
    <property type="entry name" value="Preprotein translocase subunit SecA"/>
    <property type="match status" value="1"/>
</dbReference>
<dbReference type="FunFam" id="3.40.50.300:FF:000113">
    <property type="entry name" value="Preprotein translocase subunit SecA"/>
    <property type="match status" value="1"/>
</dbReference>
<dbReference type="FunFam" id="3.90.1440.10:FF:000001">
    <property type="entry name" value="Preprotein translocase subunit SecA"/>
    <property type="match status" value="1"/>
</dbReference>
<dbReference type="Gene3D" id="1.10.3060.10">
    <property type="entry name" value="Helical scaffold and wing domains of SecA"/>
    <property type="match status" value="1"/>
</dbReference>
<dbReference type="Gene3D" id="3.40.50.300">
    <property type="entry name" value="P-loop containing nucleotide triphosphate hydrolases"/>
    <property type="match status" value="2"/>
</dbReference>
<dbReference type="Gene3D" id="3.90.1440.10">
    <property type="entry name" value="SecA, preprotein cross-linking domain"/>
    <property type="match status" value="1"/>
</dbReference>
<dbReference type="HAMAP" id="MF_01382">
    <property type="entry name" value="SecA"/>
    <property type="match status" value="1"/>
</dbReference>
<dbReference type="InterPro" id="IPR014001">
    <property type="entry name" value="Helicase_ATP-bd"/>
</dbReference>
<dbReference type="InterPro" id="IPR001650">
    <property type="entry name" value="Helicase_C-like"/>
</dbReference>
<dbReference type="InterPro" id="IPR027417">
    <property type="entry name" value="P-loop_NTPase"/>
</dbReference>
<dbReference type="InterPro" id="IPR004027">
    <property type="entry name" value="SEC_C_motif"/>
</dbReference>
<dbReference type="InterPro" id="IPR000185">
    <property type="entry name" value="SecA"/>
</dbReference>
<dbReference type="InterPro" id="IPR020937">
    <property type="entry name" value="SecA_CS"/>
</dbReference>
<dbReference type="InterPro" id="IPR011115">
    <property type="entry name" value="SecA_DEAD"/>
</dbReference>
<dbReference type="InterPro" id="IPR014018">
    <property type="entry name" value="SecA_motor_DEAD"/>
</dbReference>
<dbReference type="InterPro" id="IPR011130">
    <property type="entry name" value="SecA_preprotein_X-link_dom"/>
</dbReference>
<dbReference type="InterPro" id="IPR044722">
    <property type="entry name" value="SecA_SF2_C"/>
</dbReference>
<dbReference type="InterPro" id="IPR011116">
    <property type="entry name" value="SecA_Wing/Scaffold"/>
</dbReference>
<dbReference type="InterPro" id="IPR036266">
    <property type="entry name" value="SecA_Wing/Scaffold_sf"/>
</dbReference>
<dbReference type="InterPro" id="IPR036670">
    <property type="entry name" value="SecA_X-link_sf"/>
</dbReference>
<dbReference type="NCBIfam" id="NF009538">
    <property type="entry name" value="PRK12904.1"/>
    <property type="match status" value="1"/>
</dbReference>
<dbReference type="NCBIfam" id="TIGR00963">
    <property type="entry name" value="secA"/>
    <property type="match status" value="1"/>
</dbReference>
<dbReference type="PANTHER" id="PTHR30612:SF0">
    <property type="entry name" value="CHLOROPLAST PROTEIN-TRANSPORTING ATPASE"/>
    <property type="match status" value="1"/>
</dbReference>
<dbReference type="PANTHER" id="PTHR30612">
    <property type="entry name" value="SECA INNER MEMBRANE COMPONENT OF SEC PROTEIN SECRETION SYSTEM"/>
    <property type="match status" value="1"/>
</dbReference>
<dbReference type="Pfam" id="PF21090">
    <property type="entry name" value="P-loop_SecA"/>
    <property type="match status" value="1"/>
</dbReference>
<dbReference type="Pfam" id="PF02810">
    <property type="entry name" value="SEC-C"/>
    <property type="match status" value="1"/>
</dbReference>
<dbReference type="Pfam" id="PF07517">
    <property type="entry name" value="SecA_DEAD"/>
    <property type="match status" value="1"/>
</dbReference>
<dbReference type="Pfam" id="PF01043">
    <property type="entry name" value="SecA_PP_bind"/>
    <property type="match status" value="1"/>
</dbReference>
<dbReference type="Pfam" id="PF07516">
    <property type="entry name" value="SecA_SW"/>
    <property type="match status" value="1"/>
</dbReference>
<dbReference type="PRINTS" id="PR00906">
    <property type="entry name" value="SECA"/>
</dbReference>
<dbReference type="SMART" id="SM00957">
    <property type="entry name" value="SecA_DEAD"/>
    <property type="match status" value="1"/>
</dbReference>
<dbReference type="SMART" id="SM00958">
    <property type="entry name" value="SecA_PP_bind"/>
    <property type="match status" value="1"/>
</dbReference>
<dbReference type="SUPFAM" id="SSF81886">
    <property type="entry name" value="Helical scaffold and wing domains of SecA"/>
    <property type="match status" value="1"/>
</dbReference>
<dbReference type="SUPFAM" id="SSF52540">
    <property type="entry name" value="P-loop containing nucleoside triphosphate hydrolases"/>
    <property type="match status" value="2"/>
</dbReference>
<dbReference type="SUPFAM" id="SSF81767">
    <property type="entry name" value="Pre-protein crosslinking domain of SecA"/>
    <property type="match status" value="1"/>
</dbReference>
<dbReference type="PROSITE" id="PS01312">
    <property type="entry name" value="SECA"/>
    <property type="match status" value="1"/>
</dbReference>
<dbReference type="PROSITE" id="PS51196">
    <property type="entry name" value="SECA_MOTOR_DEAD"/>
    <property type="match status" value="1"/>
</dbReference>
<accession>B7NHK4</accession>
<keyword id="KW-0067">ATP-binding</keyword>
<keyword id="KW-0997">Cell inner membrane</keyword>
<keyword id="KW-1003">Cell membrane</keyword>
<keyword id="KW-0963">Cytoplasm</keyword>
<keyword id="KW-0472">Membrane</keyword>
<keyword id="KW-0479">Metal-binding</keyword>
<keyword id="KW-0547">Nucleotide-binding</keyword>
<keyword id="KW-0653">Protein transport</keyword>
<keyword id="KW-1278">Translocase</keyword>
<keyword id="KW-0811">Translocation</keyword>
<keyword id="KW-0813">Transport</keyword>
<keyword id="KW-0862">Zinc</keyword>
<sequence>MLIKLLTKVFGSRNDRTLRRMRKVVNIINAMEPEMEKLSDEELKGKTAEFRARLEKGEVLENLIPEAFAVVREASKRVFGMRHFDVQLLGGMVLNERCIAEMRTGEGKTLTATLPAYLNALTGKGVHVVTVNDYLAQRDAENNRPLFEFLGLTVGINLPGMPAPAKREAYAADITYGTNNEYGFDYLRDNMAFSPEERVQRKLHYALVDEVDSILIDEARTPLIISGPAEDSSEMYKRVNKIIPHLIRQEKEDSETFQGEGHFSVDEKSRQVNLTERGLVLIEELLVKEGIMDEGESLYSPANIMLMHHVTAALRAHALFTRDVDYIVKDGEVIIVDEHTGRTMQGRRWSDGLHQAVEAKEGVQIQNENQTLASITFQNYFRLYEKLAGMTGTADTEAFEFSSIYKLDTVVVPTNRPMIRKDLPDLVYMTEAEKIQAIIEDIKERTAKGQPVLVGTISIEKSELVSNELTKAGIKHNVLNAKFHANEAAIVAQAGYPAAVTIATNMAGRGTDIVLGGSWQAEVAALENPTAEQIEKIKADWQVRHDAVLAAGGLHIIGTERHESRRIDNQLRGRSGRQGDAGSSRFYLSMEDALMRIFASDRVSGMMRKLGMKPGEAIEHPWVTKAIANAQRKVESRNFDIRKQLLEYDDVANDQRRAIYSQRNELLDVSDVSETINSIREDVFKATIDAYIPPQSLEEMWDIPGLQERLKNDFDLDLPIAEWLDKEPELHEETLRERILAQSIEVYQRKEEVVGAEMMRHFEKGVMLQTLDSLWKEHLAAMDYLRQGIHLRGYAQKDPKQEYKRESFSMFAAMLESLKYEVISTLSKVQVRMPEEVEELEQQRRMEAERLAQMQQLSHQDDDSAAAAALAAQTGERKVGRNDPCPCGSGKKYKQCHGRLQ</sequence>
<gene>
    <name evidence="1" type="primary">secA</name>
    <name type="ordered locus">ECIAI39_0101</name>
</gene>
<organism>
    <name type="scientific">Escherichia coli O7:K1 (strain IAI39 / ExPEC)</name>
    <dbReference type="NCBI Taxonomy" id="585057"/>
    <lineage>
        <taxon>Bacteria</taxon>
        <taxon>Pseudomonadati</taxon>
        <taxon>Pseudomonadota</taxon>
        <taxon>Gammaproteobacteria</taxon>
        <taxon>Enterobacterales</taxon>
        <taxon>Enterobacteriaceae</taxon>
        <taxon>Escherichia</taxon>
    </lineage>
</organism>
<evidence type="ECO:0000255" key="1">
    <source>
        <dbReference type="HAMAP-Rule" id="MF_01382"/>
    </source>
</evidence>
<evidence type="ECO:0000256" key="2">
    <source>
        <dbReference type="SAM" id="MobiDB-lite"/>
    </source>
</evidence>